<reference key="1">
    <citation type="journal article" date="2004" name="Proc. Natl. Acad. Sci. U.S.A.">
        <title>Structural flexibility in the Burkholderia mallei genome.</title>
        <authorList>
            <person name="Nierman W.C."/>
            <person name="DeShazer D."/>
            <person name="Kim H.S."/>
            <person name="Tettelin H."/>
            <person name="Nelson K.E."/>
            <person name="Feldblyum T.V."/>
            <person name="Ulrich R.L."/>
            <person name="Ronning C.M."/>
            <person name="Brinkac L.M."/>
            <person name="Daugherty S.C."/>
            <person name="Davidsen T.D."/>
            <person name="DeBoy R.T."/>
            <person name="Dimitrov G."/>
            <person name="Dodson R.J."/>
            <person name="Durkin A.S."/>
            <person name="Gwinn M.L."/>
            <person name="Haft D.H."/>
            <person name="Khouri H.M."/>
            <person name="Kolonay J.F."/>
            <person name="Madupu R."/>
            <person name="Mohammoud Y."/>
            <person name="Nelson W.C."/>
            <person name="Radune D."/>
            <person name="Romero C.M."/>
            <person name="Sarria S."/>
            <person name="Selengut J."/>
            <person name="Shamblin C."/>
            <person name="Sullivan S.A."/>
            <person name="White O."/>
            <person name="Yu Y."/>
            <person name="Zafar N."/>
            <person name="Zhou L."/>
            <person name="Fraser C.M."/>
        </authorList>
    </citation>
    <scope>NUCLEOTIDE SEQUENCE [LARGE SCALE GENOMIC DNA]</scope>
    <source>
        <strain>ATCC 23344</strain>
    </source>
</reference>
<feature type="chain" id="PRO_0000002141" description="Arginine biosynthesis bifunctional protein ArgJ alpha chain" evidence="1">
    <location>
        <begin position="1"/>
        <end position="196"/>
    </location>
</feature>
<feature type="chain" id="PRO_0000002142" description="Arginine biosynthesis bifunctional protein ArgJ beta chain" evidence="1">
    <location>
        <begin position="197"/>
        <end position="413"/>
    </location>
</feature>
<feature type="active site" description="Nucleophile" evidence="1">
    <location>
        <position position="197"/>
    </location>
</feature>
<feature type="binding site" evidence="1">
    <location>
        <position position="160"/>
    </location>
    <ligand>
        <name>substrate</name>
    </ligand>
</feature>
<feature type="binding site" evidence="1">
    <location>
        <position position="186"/>
    </location>
    <ligand>
        <name>substrate</name>
    </ligand>
</feature>
<feature type="binding site" evidence="1">
    <location>
        <position position="197"/>
    </location>
    <ligand>
        <name>substrate</name>
    </ligand>
</feature>
<feature type="binding site" evidence="1">
    <location>
        <position position="284"/>
    </location>
    <ligand>
        <name>substrate</name>
    </ligand>
</feature>
<feature type="binding site" evidence="1">
    <location>
        <position position="408"/>
    </location>
    <ligand>
        <name>substrate</name>
    </ligand>
</feature>
<feature type="binding site" evidence="1">
    <location>
        <position position="413"/>
    </location>
    <ligand>
        <name>substrate</name>
    </ligand>
</feature>
<feature type="site" description="Involved in the stabilization of negative charge on the oxyanion by the formation of the oxyanion hole" evidence="1">
    <location>
        <position position="123"/>
    </location>
</feature>
<feature type="site" description="Involved in the stabilization of negative charge on the oxyanion by the formation of the oxyanion hole" evidence="1">
    <location>
        <position position="124"/>
    </location>
</feature>
<feature type="site" description="Cleavage; by autolysis" evidence="1">
    <location>
        <begin position="196"/>
        <end position="197"/>
    </location>
</feature>
<evidence type="ECO:0000255" key="1">
    <source>
        <dbReference type="HAMAP-Rule" id="MF_01106"/>
    </source>
</evidence>
<sequence>MAVNFPSIDPAQLHPVAGVTLGWAEANIRKPNRKDVLVVSVEEGATVSGVFTENRFCAAPVTVCREHLAKVRAGGAGIRALVVNTGNANAGTGEPGLAHARETCAELARLAGIAPGQVLPFSTGVILEPLPIERLKAGLPAALANRAAANWHDAAQAIMTTDTLPKAASRQVMIDGHTITLTGISKGAGMIKPNMATMLGFLAFDAKVAQPVLDALVKDVADRSFNCITIDGDTSTNDSFILIASGKASLPQIASTDSPAYAALREAVTSVAQALAQLIVRDGEGATKFITVTVEGGKSAAECRQIAYAIGHSPLVKTAFYASDPNLGRILAAIGYAGVADLDVGKIDLYLDDVLVAKAGGRNPAYLEEDGQRVMKQSEIAVRVLLGRGDAQATIWTCDLSHDYVSINADYRS</sequence>
<proteinExistence type="inferred from homology"/>
<dbReference type="EC" id="2.3.1.35" evidence="1"/>
<dbReference type="EC" id="2.3.1.1" evidence="1"/>
<dbReference type="EMBL" id="CP000010">
    <property type="protein sequence ID" value="AAU50070.1"/>
    <property type="molecule type" value="Genomic_DNA"/>
</dbReference>
<dbReference type="RefSeq" id="WP_004202972.1">
    <property type="nucleotide sequence ID" value="NC_006348.1"/>
</dbReference>
<dbReference type="RefSeq" id="YP_104082.1">
    <property type="nucleotide sequence ID" value="NC_006348.1"/>
</dbReference>
<dbReference type="SMR" id="Q62GT9"/>
<dbReference type="MEROPS" id="T05.001"/>
<dbReference type="GeneID" id="92980232"/>
<dbReference type="KEGG" id="bma:BMA2539"/>
<dbReference type="PATRIC" id="fig|243160.12.peg.2617"/>
<dbReference type="eggNOG" id="COG1364">
    <property type="taxonomic scope" value="Bacteria"/>
</dbReference>
<dbReference type="HOGENOM" id="CLU_027172_1_0_4"/>
<dbReference type="UniPathway" id="UPA00068">
    <property type="reaction ID" value="UER00106"/>
</dbReference>
<dbReference type="UniPathway" id="UPA00068">
    <property type="reaction ID" value="UER00111"/>
</dbReference>
<dbReference type="Proteomes" id="UP000006693">
    <property type="component" value="Chromosome 1"/>
</dbReference>
<dbReference type="GO" id="GO:0005737">
    <property type="term" value="C:cytoplasm"/>
    <property type="evidence" value="ECO:0007669"/>
    <property type="project" value="UniProtKB-SubCell"/>
</dbReference>
<dbReference type="GO" id="GO:0004358">
    <property type="term" value="F:glutamate N-acetyltransferase activity"/>
    <property type="evidence" value="ECO:0007669"/>
    <property type="project" value="UniProtKB-UniRule"/>
</dbReference>
<dbReference type="GO" id="GO:0004042">
    <property type="term" value="F:L-glutamate N-acetyltransferase activity"/>
    <property type="evidence" value="ECO:0007669"/>
    <property type="project" value="UniProtKB-UniRule"/>
</dbReference>
<dbReference type="GO" id="GO:0006526">
    <property type="term" value="P:L-arginine biosynthetic process"/>
    <property type="evidence" value="ECO:0007669"/>
    <property type="project" value="UniProtKB-UniRule"/>
</dbReference>
<dbReference type="GO" id="GO:0006592">
    <property type="term" value="P:ornithine biosynthetic process"/>
    <property type="evidence" value="ECO:0007669"/>
    <property type="project" value="TreeGrafter"/>
</dbReference>
<dbReference type="CDD" id="cd02152">
    <property type="entry name" value="OAT"/>
    <property type="match status" value="1"/>
</dbReference>
<dbReference type="FunFam" id="3.10.20.340:FF:000001">
    <property type="entry name" value="Arginine biosynthesis bifunctional protein ArgJ, chloroplastic"/>
    <property type="match status" value="1"/>
</dbReference>
<dbReference type="FunFam" id="3.60.70.12:FF:000001">
    <property type="entry name" value="Arginine biosynthesis bifunctional protein ArgJ, chloroplastic"/>
    <property type="match status" value="1"/>
</dbReference>
<dbReference type="Gene3D" id="3.10.20.340">
    <property type="entry name" value="ArgJ beta chain, C-terminal domain"/>
    <property type="match status" value="1"/>
</dbReference>
<dbReference type="Gene3D" id="3.60.70.12">
    <property type="entry name" value="L-amino peptidase D-ALA esterase/amidase"/>
    <property type="match status" value="1"/>
</dbReference>
<dbReference type="HAMAP" id="MF_01106">
    <property type="entry name" value="ArgJ"/>
    <property type="match status" value="1"/>
</dbReference>
<dbReference type="InterPro" id="IPR002813">
    <property type="entry name" value="Arg_biosynth_ArgJ"/>
</dbReference>
<dbReference type="InterPro" id="IPR016117">
    <property type="entry name" value="ArgJ-like_dom_sf"/>
</dbReference>
<dbReference type="InterPro" id="IPR042195">
    <property type="entry name" value="ArgJ_beta_C"/>
</dbReference>
<dbReference type="NCBIfam" id="TIGR00120">
    <property type="entry name" value="ArgJ"/>
    <property type="match status" value="1"/>
</dbReference>
<dbReference type="NCBIfam" id="NF003802">
    <property type="entry name" value="PRK05388.1"/>
    <property type="match status" value="1"/>
</dbReference>
<dbReference type="PANTHER" id="PTHR23100">
    <property type="entry name" value="ARGININE BIOSYNTHESIS BIFUNCTIONAL PROTEIN ARGJ"/>
    <property type="match status" value="1"/>
</dbReference>
<dbReference type="PANTHER" id="PTHR23100:SF0">
    <property type="entry name" value="ARGININE BIOSYNTHESIS BIFUNCTIONAL PROTEIN ARGJ, MITOCHONDRIAL"/>
    <property type="match status" value="1"/>
</dbReference>
<dbReference type="Pfam" id="PF01960">
    <property type="entry name" value="ArgJ"/>
    <property type="match status" value="1"/>
</dbReference>
<dbReference type="SUPFAM" id="SSF56266">
    <property type="entry name" value="DmpA/ArgJ-like"/>
    <property type="match status" value="1"/>
</dbReference>
<organism>
    <name type="scientific">Burkholderia mallei (strain ATCC 23344)</name>
    <dbReference type="NCBI Taxonomy" id="243160"/>
    <lineage>
        <taxon>Bacteria</taxon>
        <taxon>Pseudomonadati</taxon>
        <taxon>Pseudomonadota</taxon>
        <taxon>Betaproteobacteria</taxon>
        <taxon>Burkholderiales</taxon>
        <taxon>Burkholderiaceae</taxon>
        <taxon>Burkholderia</taxon>
        <taxon>pseudomallei group</taxon>
    </lineage>
</organism>
<comment type="function">
    <text evidence="1">Catalyzes two activities which are involved in the cyclic version of arginine biosynthesis: the synthesis of N-acetylglutamate from glutamate and acetyl-CoA as the acetyl donor, and of ornithine by transacetylation between N(2)-acetylornithine and glutamate.</text>
</comment>
<comment type="catalytic activity">
    <reaction evidence="1">
        <text>N(2)-acetyl-L-ornithine + L-glutamate = N-acetyl-L-glutamate + L-ornithine</text>
        <dbReference type="Rhea" id="RHEA:15349"/>
        <dbReference type="ChEBI" id="CHEBI:29985"/>
        <dbReference type="ChEBI" id="CHEBI:44337"/>
        <dbReference type="ChEBI" id="CHEBI:46911"/>
        <dbReference type="ChEBI" id="CHEBI:57805"/>
        <dbReference type="EC" id="2.3.1.35"/>
    </reaction>
</comment>
<comment type="catalytic activity">
    <reaction evidence="1">
        <text>L-glutamate + acetyl-CoA = N-acetyl-L-glutamate + CoA + H(+)</text>
        <dbReference type="Rhea" id="RHEA:24292"/>
        <dbReference type="ChEBI" id="CHEBI:15378"/>
        <dbReference type="ChEBI" id="CHEBI:29985"/>
        <dbReference type="ChEBI" id="CHEBI:44337"/>
        <dbReference type="ChEBI" id="CHEBI:57287"/>
        <dbReference type="ChEBI" id="CHEBI:57288"/>
        <dbReference type="EC" id="2.3.1.1"/>
    </reaction>
</comment>
<comment type="pathway">
    <text evidence="1">Amino-acid biosynthesis; L-arginine biosynthesis; L-ornithine and N-acetyl-L-glutamate from L-glutamate and N(2)-acetyl-L-ornithine (cyclic): step 1/1.</text>
</comment>
<comment type="pathway">
    <text evidence="1">Amino-acid biosynthesis; L-arginine biosynthesis; N(2)-acetyl-L-ornithine from L-glutamate: step 1/4.</text>
</comment>
<comment type="subunit">
    <text evidence="1">Heterotetramer of two alpha and two beta chains.</text>
</comment>
<comment type="subcellular location">
    <subcellularLocation>
        <location evidence="1">Cytoplasm</location>
    </subcellularLocation>
</comment>
<comment type="similarity">
    <text evidence="1">Belongs to the ArgJ family.</text>
</comment>
<gene>
    <name evidence="1" type="primary">argJ</name>
    <name type="ordered locus">BMA2539</name>
</gene>
<protein>
    <recommendedName>
        <fullName evidence="1">Arginine biosynthesis bifunctional protein ArgJ</fullName>
    </recommendedName>
    <domain>
        <recommendedName>
            <fullName evidence="1">Glutamate N-acetyltransferase</fullName>
            <ecNumber evidence="1">2.3.1.35</ecNumber>
        </recommendedName>
        <alternativeName>
            <fullName evidence="1">Ornithine acetyltransferase</fullName>
            <shortName evidence="1">OATase</shortName>
        </alternativeName>
        <alternativeName>
            <fullName evidence="1">Ornithine transacetylase</fullName>
        </alternativeName>
    </domain>
    <domain>
        <recommendedName>
            <fullName evidence="1">Amino-acid acetyltransferase</fullName>
            <ecNumber evidence="1">2.3.1.1</ecNumber>
        </recommendedName>
        <alternativeName>
            <fullName evidence="1">N-acetylglutamate synthase</fullName>
            <shortName evidence="1">AGSase</shortName>
        </alternativeName>
    </domain>
    <component>
        <recommendedName>
            <fullName evidence="1">Arginine biosynthesis bifunctional protein ArgJ alpha chain</fullName>
        </recommendedName>
    </component>
    <component>
        <recommendedName>
            <fullName evidence="1">Arginine biosynthesis bifunctional protein ArgJ beta chain</fullName>
        </recommendedName>
    </component>
</protein>
<accession>Q62GT9</accession>
<keyword id="KW-0012">Acyltransferase</keyword>
<keyword id="KW-0028">Amino-acid biosynthesis</keyword>
<keyword id="KW-0055">Arginine biosynthesis</keyword>
<keyword id="KW-0068">Autocatalytic cleavage</keyword>
<keyword id="KW-0963">Cytoplasm</keyword>
<keyword id="KW-0511">Multifunctional enzyme</keyword>
<keyword id="KW-1185">Reference proteome</keyword>
<keyword id="KW-0808">Transferase</keyword>
<name>ARGJ_BURMA</name>